<dbReference type="EMBL" id="AK078911">
    <property type="protein sequence ID" value="BAC37454.1"/>
    <property type="molecule type" value="mRNA"/>
</dbReference>
<dbReference type="EMBL" id="AC153567">
    <property type="status" value="NOT_ANNOTATED_CDS"/>
    <property type="molecule type" value="Genomic_DNA"/>
</dbReference>
<dbReference type="EMBL" id="AC159380">
    <property type="status" value="NOT_ANNOTATED_CDS"/>
    <property type="molecule type" value="Genomic_DNA"/>
</dbReference>
<dbReference type="FunCoup" id="G3UZ78">
    <property type="interactions" value="47"/>
</dbReference>
<dbReference type="STRING" id="10090.ENSMUSP00000045452"/>
<dbReference type="iPTMnet" id="G3UZ78"/>
<dbReference type="PhosphoSitePlus" id="G3UZ78"/>
<dbReference type="PaxDb" id="10090-ENSMUSP00000045452"/>
<dbReference type="ProteomicsDB" id="296181">
    <molecule id="G3UZ78-1"/>
</dbReference>
<dbReference type="ProteomicsDB" id="296182">
    <molecule id="G3UZ78-2"/>
</dbReference>
<dbReference type="Antibodypedia" id="50988">
    <property type="antibodies" value="16 antibodies from 8 providers"/>
</dbReference>
<dbReference type="Ensembl" id="ENSMUST00000045328.14">
    <molecule id="G3UZ78-2"/>
    <property type="protein sequence ID" value="ENSMUSP00000045452.8"/>
    <property type="gene ID" value="ENSMUSG00000050994.22"/>
</dbReference>
<dbReference type="Ensembl" id="ENSMUST00000172530.8">
    <molecule id="G3UZ78-1"/>
    <property type="protein sequence ID" value="ENSMUSP00000134378.2"/>
    <property type="gene ID" value="ENSMUSG00000050994.22"/>
</dbReference>
<dbReference type="UCSC" id="uc007eje.2">
    <molecule id="G3UZ78-1"/>
    <property type="organism name" value="mouse"/>
</dbReference>
<dbReference type="UCSC" id="uc007ejf.1">
    <molecule id="G3UZ78-2"/>
    <property type="organism name" value="mouse"/>
</dbReference>
<dbReference type="AGR" id="MGI:3605549"/>
<dbReference type="MGI" id="MGI:3605549">
    <property type="gene designation" value="Adgb"/>
</dbReference>
<dbReference type="VEuPathDB" id="HostDB:ENSMUSG00000050994"/>
<dbReference type="eggNOG" id="KOG0045">
    <property type="taxonomic scope" value="Eukaryota"/>
</dbReference>
<dbReference type="GeneTree" id="ENSGT00390000014904"/>
<dbReference type="HOGENOM" id="CLU_776048_0_0_1"/>
<dbReference type="InParanoid" id="G3UZ78"/>
<dbReference type="TreeFam" id="TF329120"/>
<dbReference type="ChiTaRS" id="Adgb">
    <property type="organism name" value="mouse"/>
</dbReference>
<dbReference type="PRO" id="PR:G3UZ78"/>
<dbReference type="Proteomes" id="UP000000589">
    <property type="component" value="Chromosome 10"/>
</dbReference>
<dbReference type="RNAct" id="G3UZ78">
    <property type="molecule type" value="protein"/>
</dbReference>
<dbReference type="Bgee" id="ENSMUSG00000050994">
    <property type="expression patterns" value="Expressed in spermatid and 38 other cell types or tissues"/>
</dbReference>
<dbReference type="ExpressionAtlas" id="G3UZ78">
    <property type="expression patterns" value="baseline and differential"/>
</dbReference>
<dbReference type="GO" id="GO:0097227">
    <property type="term" value="C:sperm annulus"/>
    <property type="evidence" value="ECO:0000314"/>
    <property type="project" value="UniProtKB"/>
</dbReference>
<dbReference type="GO" id="GO:0036126">
    <property type="term" value="C:sperm flagellum"/>
    <property type="evidence" value="ECO:0000314"/>
    <property type="project" value="UniProtKB"/>
</dbReference>
<dbReference type="GO" id="GO:0097225">
    <property type="term" value="C:sperm midpiece"/>
    <property type="evidence" value="ECO:0000314"/>
    <property type="project" value="UniProtKB"/>
</dbReference>
<dbReference type="GO" id="GO:0004198">
    <property type="term" value="F:calcium-dependent cysteine-type endopeptidase activity"/>
    <property type="evidence" value="ECO:0007669"/>
    <property type="project" value="InterPro"/>
</dbReference>
<dbReference type="GO" id="GO:0020037">
    <property type="term" value="F:heme binding"/>
    <property type="evidence" value="ECO:0007669"/>
    <property type="project" value="InterPro"/>
</dbReference>
<dbReference type="GO" id="GO:0046872">
    <property type="term" value="F:metal ion binding"/>
    <property type="evidence" value="ECO:0007669"/>
    <property type="project" value="UniProtKB-KW"/>
</dbReference>
<dbReference type="GO" id="GO:0019825">
    <property type="term" value="F:oxygen binding"/>
    <property type="evidence" value="ECO:0007669"/>
    <property type="project" value="InterPro"/>
</dbReference>
<dbReference type="GO" id="GO:0006508">
    <property type="term" value="P:proteolysis"/>
    <property type="evidence" value="ECO:0007669"/>
    <property type="project" value="InterPro"/>
</dbReference>
<dbReference type="GO" id="GO:0007286">
    <property type="term" value="P:spermatid development"/>
    <property type="evidence" value="ECO:0000315"/>
    <property type="project" value="UniProtKB"/>
</dbReference>
<dbReference type="GO" id="GO:0007283">
    <property type="term" value="P:spermatogenesis"/>
    <property type="evidence" value="ECO:0000315"/>
    <property type="project" value="UniProtKB"/>
</dbReference>
<dbReference type="CDD" id="cd22307">
    <property type="entry name" value="Adgb_C_mid-like"/>
    <property type="match status" value="1"/>
</dbReference>
<dbReference type="Gene3D" id="1.10.490.10">
    <property type="entry name" value="Globins"/>
    <property type="match status" value="1"/>
</dbReference>
<dbReference type="InterPro" id="IPR053033">
    <property type="entry name" value="Androglobin-like"/>
</dbReference>
<dbReference type="InterPro" id="IPR054093">
    <property type="entry name" value="Androglobin_II"/>
</dbReference>
<dbReference type="InterPro" id="IPR054094">
    <property type="entry name" value="Androglobin_IV"/>
</dbReference>
<dbReference type="InterPro" id="IPR054095">
    <property type="entry name" value="Androglobin_V"/>
</dbReference>
<dbReference type="InterPro" id="IPR012292">
    <property type="entry name" value="Globin/Proto"/>
</dbReference>
<dbReference type="InterPro" id="IPR038765">
    <property type="entry name" value="Papain-like_cys_pep_sf"/>
</dbReference>
<dbReference type="InterPro" id="IPR001300">
    <property type="entry name" value="Peptidase_C2_calpain_cat"/>
</dbReference>
<dbReference type="PANTHER" id="PTHR46298">
    <property type="entry name" value="ANDROGLOBIN"/>
    <property type="match status" value="1"/>
</dbReference>
<dbReference type="PANTHER" id="PTHR46298:SF1">
    <property type="entry name" value="ANDROGLOBIN"/>
    <property type="match status" value="1"/>
</dbReference>
<dbReference type="Pfam" id="PF22068">
    <property type="entry name" value="Androglobin_II"/>
    <property type="match status" value="1"/>
</dbReference>
<dbReference type="Pfam" id="PF22069">
    <property type="entry name" value="Androglobin_IV"/>
    <property type="match status" value="1"/>
</dbReference>
<dbReference type="Pfam" id="PF22070">
    <property type="entry name" value="Androglobin_V"/>
    <property type="match status" value="1"/>
</dbReference>
<dbReference type="Pfam" id="PF00648">
    <property type="entry name" value="Peptidase_C2"/>
    <property type="match status" value="1"/>
</dbReference>
<dbReference type="SUPFAM" id="SSF54001">
    <property type="entry name" value="Cysteine proteinases"/>
    <property type="match status" value="1"/>
</dbReference>
<dbReference type="PROSITE" id="PS50203">
    <property type="entry name" value="CALPAIN_CAT"/>
    <property type="match status" value="1"/>
</dbReference>
<dbReference type="PROSITE" id="PS52042">
    <property type="entry name" value="GLOBIN_CP_ADGB"/>
    <property type="match status" value="1"/>
</dbReference>
<dbReference type="PROSITE" id="PS50096">
    <property type="entry name" value="IQ"/>
    <property type="match status" value="1"/>
</dbReference>
<name>ADGB_MOUSE</name>
<feature type="chain" id="PRO_0000416257" description="Androglobin">
    <location>
        <begin position="1"/>
        <end position="1657"/>
    </location>
</feature>
<feature type="domain" description="Calpain catalytic" evidence="4">
    <location>
        <begin position="70"/>
        <end position="402"/>
    </location>
</feature>
<feature type="domain" description="Globin; C-terminal part" evidence="5">
    <location>
        <begin position="762"/>
        <end position="889"/>
    </location>
</feature>
<feature type="domain" description="IQ" evidence="3">
    <location>
        <begin position="905"/>
        <end position="934"/>
    </location>
</feature>
<feature type="domain" description="Globin; N-terminal part" evidence="5">
    <location>
        <begin position="935"/>
        <end position="967"/>
    </location>
</feature>
<feature type="region of interest" description="Disordered" evidence="6">
    <location>
        <begin position="1"/>
        <end position="40"/>
    </location>
</feature>
<feature type="region of interest" description="Disordered" evidence="6">
    <location>
        <begin position="321"/>
        <end position="398"/>
    </location>
</feature>
<feature type="region of interest" description="Disordered" evidence="6">
    <location>
        <begin position="1184"/>
        <end position="1226"/>
    </location>
</feature>
<feature type="region of interest" description="Disordered" evidence="6">
    <location>
        <begin position="1288"/>
        <end position="1356"/>
    </location>
</feature>
<feature type="region of interest" description="Disordered" evidence="6">
    <location>
        <begin position="1422"/>
        <end position="1459"/>
    </location>
</feature>
<feature type="region of interest" description="Disordered" evidence="6">
    <location>
        <begin position="1638"/>
        <end position="1657"/>
    </location>
</feature>
<feature type="coiled-coil region" evidence="2">
    <location>
        <begin position="1585"/>
        <end position="1640"/>
    </location>
</feature>
<feature type="compositionally biased region" description="Basic residues" evidence="6">
    <location>
        <begin position="1"/>
        <end position="11"/>
    </location>
</feature>
<feature type="compositionally biased region" description="Basic and acidic residues" evidence="6">
    <location>
        <begin position="321"/>
        <end position="386"/>
    </location>
</feature>
<feature type="compositionally biased region" description="Basic and acidic residues" evidence="6">
    <location>
        <begin position="1321"/>
        <end position="1336"/>
    </location>
</feature>
<feature type="compositionally biased region" description="Polar residues" evidence="6">
    <location>
        <begin position="1341"/>
        <end position="1351"/>
    </location>
</feature>
<feature type="compositionally biased region" description="Polar residues" evidence="6">
    <location>
        <begin position="1422"/>
        <end position="1443"/>
    </location>
</feature>
<feature type="binding site" description="distal binding residue" evidence="5">
    <location>
        <position position="791"/>
    </location>
    <ligand>
        <name>heme b</name>
        <dbReference type="ChEBI" id="CHEBI:60344"/>
    </ligand>
    <ligandPart>
        <name>Fe</name>
        <dbReference type="ChEBI" id="CHEBI:18248"/>
    </ligandPart>
</feature>
<feature type="binding site" description="proximal binding residue" evidence="5">
    <location>
        <position position="823"/>
    </location>
    <ligand>
        <name>heme b</name>
        <dbReference type="ChEBI" id="CHEBI:60344"/>
    </ligand>
    <ligandPart>
        <name>Fe</name>
        <dbReference type="ChEBI" id="CHEBI:18248"/>
    </ligandPart>
</feature>
<feature type="splice variant" id="VSP_042575" description="In isoform 2." evidence="10">
    <location>
        <begin position="1"/>
        <end position="398"/>
    </location>
</feature>
<feature type="splice variant" id="VSP_042576" description="In isoform 2." evidence="10">
    <original>QYSMQSLSEC</original>
    <variation>MCAEDAEWKG</variation>
    <location>
        <begin position="399"/>
        <end position="408"/>
    </location>
</feature>
<feature type="splice variant" id="VSP_042577" description="In isoform 2." evidence="10">
    <original>RHMLLFNAY</original>
    <variation>YGLTSCFLV</variation>
    <location>
        <begin position="746"/>
        <end position="754"/>
    </location>
</feature>
<feature type="splice variant" id="VSP_042578" description="In isoform 2." evidence="10">
    <location>
        <begin position="755"/>
        <end position="1657"/>
    </location>
</feature>
<sequence length="1657" mass="188556">MASKQAKRKEVHRINSAHGSDKSKDLYHFGSNVPPGSFEQKKGKFPIWPEWSEADINAEKWDAGKGGKEKDKTAKSPIFHFFEDPEGKIELPQSLKVFSWKRPQDFIFSRTPVVVKNEITFDLFSPNEHLLCSELMRWIISEIYAVWKIFNGGILSNYHKGNLGELPILPWKPWEHIYSLCKAVKGHVPLFNSYGKYVVKLYWMGCWRKITVDDFLPFDEENNLLLPATSYEFELWPMLLSKAIIKLANVDVHVAHRRELGELTVIHALTGWLPEVIPLHPAYVDRVWELLKEILPEFKLTEEPSSESKITTIDNKLKEATKENKDGKDGKNGKDLKDGKDMKDGKDGKDGKDGKDGKDGKDEKADARDLGKKNKKDGEKEKEKFKFSLHGSRPSSDVQYSMQSLSECSSAIQLPHMVVYATFTPLYLFENKIFSLEKMANSAEKLREYGLSHICSHPVLVTRSRSCPLVSPPKPPPLPAWKLIRHKKETVITDEAQDAVPKKPEQFLEISSPFLNYRMTPFTIPTETHFVQSVIKKGTPLGSSLPPLVENDLVASTSQGEMSIVNGNQSQGNIALQITLGKDEPSEPALADFHQLEATSLDRDLISLTTATLDKSQEELAINEGVAKEIWLDFEDFCVCFHHIYIFHKPHSYCLNFQKSEFKFVEERVPYYLFVDSLKPIELLVCFSALVRWGESGALTKDSPPVEPGLLTAEAITWKSLKPLSVVLRIHTYATKASVVRLPAGRHMLLFNAYSPVGHAIHVCSMTTFVIGDEDIVLPNFEPESYRFTEQSIIIMKAIGNVIANFKDKGKLPAALRDLQAAHYPIPLNNKELTAQHFRVFHISLWRLMKKSQVAKPPSNFKFAFRAMVFDTDLLDSFSEDVSLAEWVDLKYSTPINEKEYTSEEIAAAVKIQSMWKGCYVRLLMKARKPETKENVTVADTLQKIWAVLEMNLEQYALSLLRLMFKSKCKSMESYPCYQDEETKLAFADHTVNYADQPPNSWFIVFREIFLVPQDMIILPKVYTTLPICILHVINNDTLEQVPKVFQKVVPFLYTKNKKGYTFVAEAYTGDTFVSGARWKLRLIGSYNPLPFLARDSPCNTFSIKEIRDYYIPNDRKILFRYSIKVTVAQSITIQVRTSKPDTFIKLQVLESEEVITSTVGKGQAVIPAFYFLGNEKALSSQSSKQVLLSHPSPKKDPEVLTKKKSGQPGQKSFKGRSGGGLTDTGMPLLEEEILNIPTLEENSSTPQQCYKYIIQCLVLFNSWPLNETQLTFVQALKDMEKMDIKEKHEEPAPMGSPDSHAVSEGQKSVGVPKTTRKGKEKSAEKEKLAKEKQAPRFEPQQVQMPTAVHSQQEDPNKPYWILRLVSEHTDSDYVDVKKDTERADEIRAMKQAWETTEPGRAIKAAQARLKYLTQFIKKPVTTDTTTSAPSPETLSVSQSQTKSSEEGELDTGKYADIKELPPNAAGSVLWKKWQMTKTITSLTKFTSSESVPKEEPPQKEIPVVRQRSPTILETSPQQIRKALEFLDFSHYVRKTAAEAVLQTEELNKQQAMQKAEEIHQFRQHRSRILSIRDIDQEERFKQKDEVLEMYGEMRDSVDEARQKILDIREVYRNKLLEAERLRMEALAAQEAAVKIEIEKKSPASDSQKKKKVGKKK</sequence>
<evidence type="ECO:0000250" key="1">
    <source>
        <dbReference type="UniProtKB" id="Q8N7X0"/>
    </source>
</evidence>
<evidence type="ECO:0000255" key="2"/>
<evidence type="ECO:0000255" key="3">
    <source>
        <dbReference type="PROSITE-ProRule" id="PRU00116"/>
    </source>
</evidence>
<evidence type="ECO:0000255" key="4">
    <source>
        <dbReference type="PROSITE-ProRule" id="PRU00239"/>
    </source>
</evidence>
<evidence type="ECO:0000255" key="5">
    <source>
        <dbReference type="PROSITE-ProRule" id="PRU01386"/>
    </source>
</evidence>
<evidence type="ECO:0000256" key="6">
    <source>
        <dbReference type="SAM" id="MobiDB-lite"/>
    </source>
</evidence>
<evidence type="ECO:0000269" key="7">
    <source>
    </source>
</evidence>
<evidence type="ECO:0000269" key="8">
    <source>
    </source>
</evidence>
<evidence type="ECO:0000269" key="9">
    <source>
    </source>
</evidence>
<evidence type="ECO:0000303" key="10">
    <source>
    </source>
</evidence>
<evidence type="ECO:0000303" key="11">
    <source>
    </source>
</evidence>
<evidence type="ECO:0000305" key="12"/>
<evidence type="ECO:0000312" key="13">
    <source>
        <dbReference type="MGI" id="MGI:3605549"/>
    </source>
</evidence>
<keyword id="KW-0025">Alternative splicing</keyword>
<keyword id="KW-0966">Cell projection</keyword>
<keyword id="KW-0969">Cilium</keyword>
<keyword id="KW-0175">Coiled coil</keyword>
<keyword id="KW-0221">Differentiation</keyword>
<keyword id="KW-0282">Flagellum</keyword>
<keyword id="KW-0349">Heme</keyword>
<keyword id="KW-0408">Iron</keyword>
<keyword id="KW-0479">Metal-binding</keyword>
<keyword id="KW-1185">Reference proteome</keyword>
<keyword id="KW-0744">Spermatogenesis</keyword>
<organism>
    <name type="scientific">Mus musculus</name>
    <name type="common">Mouse</name>
    <dbReference type="NCBI Taxonomy" id="10090"/>
    <lineage>
        <taxon>Eukaryota</taxon>
        <taxon>Metazoa</taxon>
        <taxon>Chordata</taxon>
        <taxon>Craniata</taxon>
        <taxon>Vertebrata</taxon>
        <taxon>Euteleostomi</taxon>
        <taxon>Mammalia</taxon>
        <taxon>Eutheria</taxon>
        <taxon>Euarchontoglires</taxon>
        <taxon>Glires</taxon>
        <taxon>Rodentia</taxon>
        <taxon>Myomorpha</taxon>
        <taxon>Muroidea</taxon>
        <taxon>Muridae</taxon>
        <taxon>Murinae</taxon>
        <taxon>Mus</taxon>
        <taxon>Mus</taxon>
    </lineage>
</organism>
<reference key="1">
    <citation type="journal article" date="2005" name="Science">
        <title>The transcriptional landscape of the mammalian genome.</title>
        <authorList>
            <person name="Carninci P."/>
            <person name="Kasukawa T."/>
            <person name="Katayama S."/>
            <person name="Gough J."/>
            <person name="Frith M.C."/>
            <person name="Maeda N."/>
            <person name="Oyama R."/>
            <person name="Ravasi T."/>
            <person name="Lenhard B."/>
            <person name="Wells C."/>
            <person name="Kodzius R."/>
            <person name="Shimokawa K."/>
            <person name="Bajic V.B."/>
            <person name="Brenner S.E."/>
            <person name="Batalov S."/>
            <person name="Forrest A.R."/>
            <person name="Zavolan M."/>
            <person name="Davis M.J."/>
            <person name="Wilming L.G."/>
            <person name="Aidinis V."/>
            <person name="Allen J.E."/>
            <person name="Ambesi-Impiombato A."/>
            <person name="Apweiler R."/>
            <person name="Aturaliya R.N."/>
            <person name="Bailey T.L."/>
            <person name="Bansal M."/>
            <person name="Baxter L."/>
            <person name="Beisel K.W."/>
            <person name="Bersano T."/>
            <person name="Bono H."/>
            <person name="Chalk A.M."/>
            <person name="Chiu K.P."/>
            <person name="Choudhary V."/>
            <person name="Christoffels A."/>
            <person name="Clutterbuck D.R."/>
            <person name="Crowe M.L."/>
            <person name="Dalla E."/>
            <person name="Dalrymple B.P."/>
            <person name="de Bono B."/>
            <person name="Della Gatta G."/>
            <person name="di Bernardo D."/>
            <person name="Down T."/>
            <person name="Engstrom P."/>
            <person name="Fagiolini M."/>
            <person name="Faulkner G."/>
            <person name="Fletcher C.F."/>
            <person name="Fukushima T."/>
            <person name="Furuno M."/>
            <person name="Futaki S."/>
            <person name="Gariboldi M."/>
            <person name="Georgii-Hemming P."/>
            <person name="Gingeras T.R."/>
            <person name="Gojobori T."/>
            <person name="Green R.E."/>
            <person name="Gustincich S."/>
            <person name="Harbers M."/>
            <person name="Hayashi Y."/>
            <person name="Hensch T.K."/>
            <person name="Hirokawa N."/>
            <person name="Hill D."/>
            <person name="Huminiecki L."/>
            <person name="Iacono M."/>
            <person name="Ikeo K."/>
            <person name="Iwama A."/>
            <person name="Ishikawa T."/>
            <person name="Jakt M."/>
            <person name="Kanapin A."/>
            <person name="Katoh M."/>
            <person name="Kawasawa Y."/>
            <person name="Kelso J."/>
            <person name="Kitamura H."/>
            <person name="Kitano H."/>
            <person name="Kollias G."/>
            <person name="Krishnan S.P."/>
            <person name="Kruger A."/>
            <person name="Kummerfeld S.K."/>
            <person name="Kurochkin I.V."/>
            <person name="Lareau L.F."/>
            <person name="Lazarevic D."/>
            <person name="Lipovich L."/>
            <person name="Liu J."/>
            <person name="Liuni S."/>
            <person name="McWilliam S."/>
            <person name="Madan Babu M."/>
            <person name="Madera M."/>
            <person name="Marchionni L."/>
            <person name="Matsuda H."/>
            <person name="Matsuzawa S."/>
            <person name="Miki H."/>
            <person name="Mignone F."/>
            <person name="Miyake S."/>
            <person name="Morris K."/>
            <person name="Mottagui-Tabar S."/>
            <person name="Mulder N."/>
            <person name="Nakano N."/>
            <person name="Nakauchi H."/>
            <person name="Ng P."/>
            <person name="Nilsson R."/>
            <person name="Nishiguchi S."/>
            <person name="Nishikawa S."/>
            <person name="Nori F."/>
            <person name="Ohara O."/>
            <person name="Okazaki Y."/>
            <person name="Orlando V."/>
            <person name="Pang K.C."/>
            <person name="Pavan W.J."/>
            <person name="Pavesi G."/>
            <person name="Pesole G."/>
            <person name="Petrovsky N."/>
            <person name="Piazza S."/>
            <person name="Reed J."/>
            <person name="Reid J.F."/>
            <person name="Ring B.Z."/>
            <person name="Ringwald M."/>
            <person name="Rost B."/>
            <person name="Ruan Y."/>
            <person name="Salzberg S.L."/>
            <person name="Sandelin A."/>
            <person name="Schneider C."/>
            <person name="Schoenbach C."/>
            <person name="Sekiguchi K."/>
            <person name="Semple C.A."/>
            <person name="Seno S."/>
            <person name="Sessa L."/>
            <person name="Sheng Y."/>
            <person name="Shibata Y."/>
            <person name="Shimada H."/>
            <person name="Shimada K."/>
            <person name="Silva D."/>
            <person name="Sinclair B."/>
            <person name="Sperling S."/>
            <person name="Stupka E."/>
            <person name="Sugiura K."/>
            <person name="Sultana R."/>
            <person name="Takenaka Y."/>
            <person name="Taki K."/>
            <person name="Tammoja K."/>
            <person name="Tan S.L."/>
            <person name="Tang S."/>
            <person name="Taylor M.S."/>
            <person name="Tegner J."/>
            <person name="Teichmann S.A."/>
            <person name="Ueda H.R."/>
            <person name="van Nimwegen E."/>
            <person name="Verardo R."/>
            <person name="Wei C.L."/>
            <person name="Yagi K."/>
            <person name="Yamanishi H."/>
            <person name="Zabarovsky E."/>
            <person name="Zhu S."/>
            <person name="Zimmer A."/>
            <person name="Hide W."/>
            <person name="Bult C."/>
            <person name="Grimmond S.M."/>
            <person name="Teasdale R.D."/>
            <person name="Liu E.T."/>
            <person name="Brusic V."/>
            <person name="Quackenbush J."/>
            <person name="Wahlestedt C."/>
            <person name="Mattick J.S."/>
            <person name="Hume D.A."/>
            <person name="Kai C."/>
            <person name="Sasaki D."/>
            <person name="Tomaru Y."/>
            <person name="Fukuda S."/>
            <person name="Kanamori-Katayama M."/>
            <person name="Suzuki M."/>
            <person name="Aoki J."/>
            <person name="Arakawa T."/>
            <person name="Iida J."/>
            <person name="Imamura K."/>
            <person name="Itoh M."/>
            <person name="Kato T."/>
            <person name="Kawaji H."/>
            <person name="Kawagashira N."/>
            <person name="Kawashima T."/>
            <person name="Kojima M."/>
            <person name="Kondo S."/>
            <person name="Konno H."/>
            <person name="Nakano K."/>
            <person name="Ninomiya N."/>
            <person name="Nishio T."/>
            <person name="Okada M."/>
            <person name="Plessy C."/>
            <person name="Shibata K."/>
            <person name="Shiraki T."/>
            <person name="Suzuki S."/>
            <person name="Tagami M."/>
            <person name="Waki K."/>
            <person name="Watahiki A."/>
            <person name="Okamura-Oho Y."/>
            <person name="Suzuki H."/>
            <person name="Kawai J."/>
            <person name="Hayashizaki Y."/>
        </authorList>
    </citation>
    <scope>NUCLEOTIDE SEQUENCE [LARGE SCALE MRNA] (ISOFORM 2)</scope>
    <source>
        <strain>C57BL/6J</strain>
        <tissue>Cecum</tissue>
    </source>
</reference>
<reference key="2">
    <citation type="journal article" date="2009" name="PLoS Biol.">
        <title>Lineage-specific biology revealed by a finished genome assembly of the mouse.</title>
        <authorList>
            <person name="Church D.M."/>
            <person name="Goodstadt L."/>
            <person name="Hillier L.W."/>
            <person name="Zody M.C."/>
            <person name="Goldstein S."/>
            <person name="She X."/>
            <person name="Bult C.J."/>
            <person name="Agarwala R."/>
            <person name="Cherry J.L."/>
            <person name="DiCuccio M."/>
            <person name="Hlavina W."/>
            <person name="Kapustin Y."/>
            <person name="Meric P."/>
            <person name="Maglott D."/>
            <person name="Birtle Z."/>
            <person name="Marques A.C."/>
            <person name="Graves T."/>
            <person name="Zhou S."/>
            <person name="Teague B."/>
            <person name="Potamousis K."/>
            <person name="Churas C."/>
            <person name="Place M."/>
            <person name="Herschleb J."/>
            <person name="Runnheim R."/>
            <person name="Forrest D."/>
            <person name="Amos-Landgraf J."/>
            <person name="Schwartz D.C."/>
            <person name="Cheng Z."/>
            <person name="Lindblad-Toh K."/>
            <person name="Eichler E.E."/>
            <person name="Ponting C.P."/>
        </authorList>
    </citation>
    <scope>NUCLEOTIDE SEQUENCE [LARGE SCALE GENOMIC DNA]</scope>
    <source>
        <strain>C57BL/6J</strain>
    </source>
</reference>
<reference key="3">
    <citation type="journal article" date="2010" name="Cell">
        <title>A tissue-specific atlas of mouse protein phosphorylation and expression.</title>
        <authorList>
            <person name="Huttlin E.L."/>
            <person name="Jedrychowski M.P."/>
            <person name="Elias J.E."/>
            <person name="Goswami T."/>
            <person name="Rad R."/>
            <person name="Beausoleil S.A."/>
            <person name="Villen J."/>
            <person name="Haas W."/>
            <person name="Sowa M.E."/>
            <person name="Gygi S.P."/>
        </authorList>
    </citation>
    <scope>IDENTIFICATION BY MASS SPECTROMETRY [LARGE SCALE ANALYSIS]</scope>
    <source>
        <tissue>Testis</tissue>
    </source>
</reference>
<reference key="4">
    <citation type="journal article" date="2012" name="Mol. Biol. Evol.">
        <title>Androglobin: a chimeric globin in metazoans that is preferentially expressed in mammalian testes.</title>
        <authorList>
            <person name="Hoogewijs D."/>
            <person name="Ebner B."/>
            <person name="Germani F."/>
            <person name="Hoffmann F.G."/>
            <person name="Fabrizius A."/>
            <person name="Moens L."/>
            <person name="Burmester T."/>
            <person name="Dewilde S."/>
            <person name="Storz J.F."/>
            <person name="Vinogradov S.N."/>
            <person name="Hankeln T."/>
        </authorList>
    </citation>
    <scope>TISSUE SPECIFICITY</scope>
</reference>
<reference key="5">
    <citation type="journal article" date="2022" name="Elife">
        <title>Androglobin, a chimeric mammalian globin, is required for male fertility.</title>
        <authorList>
            <person name="Keppner A."/>
            <person name="Correia M."/>
            <person name="Santambrogio S."/>
            <person name="Koay T.W."/>
            <person name="Maric D."/>
            <person name="Osterhof C."/>
            <person name="Winter D.V."/>
            <person name="Clerc A."/>
            <person name="Stumpe M."/>
            <person name="Chalmel F."/>
            <person name="Dewilde S."/>
            <person name="Odermatt A."/>
            <person name="Kressler D."/>
            <person name="Hankeln T."/>
            <person name="Wenger R.H."/>
            <person name="Hoogewijs D."/>
        </authorList>
    </citation>
    <scope>FUNCTION</scope>
    <scope>INTERACTION WITH SEPT10</scope>
    <scope>SUBCELLULAR LOCATION</scope>
    <scope>DEVELOPMENTAL STAGE</scope>
    <scope>DISRUPTION PHENOTYPE</scope>
</reference>
<reference key="6">
    <citation type="journal article" date="2023" name="Hum. Genet.">
        <title>ADGB variants cause asthenozoospermia and male infertility.</title>
        <authorList>
            <person name="Qu R."/>
            <person name="Zhang Z."/>
            <person name="Wu L."/>
            <person name="Li Q."/>
            <person name="Mu J."/>
            <person name="Zhao L."/>
            <person name="Yan Z."/>
            <person name="Wang W."/>
            <person name="Zeng Y."/>
            <person name="Liu R."/>
            <person name="Dong J."/>
            <person name="Li Q."/>
            <person name="Sun X."/>
            <person name="Wang L."/>
            <person name="Sang Q."/>
            <person name="Chen B."/>
            <person name="Kuang Y."/>
        </authorList>
    </citation>
    <scope>FUNCTION</scope>
    <scope>INTERACTION WITH CFAP69 AND SPEF2</scope>
    <scope>DISRUPTION PHENOTYPE</scope>
</reference>
<accession>G3UZ78</accession>
<accession>Q8C5C7</accession>
<protein>
    <recommendedName>
        <fullName evidence="11">Androglobin</fullName>
    </recommendedName>
</protein>
<comment type="function">
    <text evidence="1 8 9">Probable chimeric globin with a bis-histidyl six-coordinate heme-iron atom through which it could bind dioxygen, carbon monoxide and nitric oxide (By similarity). Required for sperm flagellum formation and maturation of elongating spermatids, thus playing an essential role in male fertility (PubMed:35700329, PubMed:36995441).</text>
</comment>
<comment type="subunit">
    <text evidence="1 8 9">Interacts with septin SEPT10; contributes to in vitro proteolytic cleavage of SEPT10 in a calmodulin-dependent manner (PubMed:35700329). Interacts with CFAP69 (PubMed:36995441). Interacts with SPEF2 (PubMed:36995441). May interact with calmodulin (By similarity).</text>
</comment>
<comment type="subcellular location">
    <subcellularLocation>
        <location evidence="8">Cell projection</location>
        <location evidence="8">Cilium</location>
        <location evidence="8">Flagellum</location>
    </subcellularLocation>
    <text evidence="8">Expressed within the midpiece and along the whole sperm flagellum (PubMed:35700329). Detected in the annulus of the sperm flagellum in S12 and S15 spermatids and mature sperm (PubMed:35700329).</text>
</comment>
<comment type="alternative products">
    <event type="alternative splicing"/>
    <isoform>
        <id>G3UZ78-1</id>
        <name>1</name>
        <sequence type="displayed"/>
    </isoform>
    <isoform>
        <id>G3UZ78-2</id>
        <name>2</name>
        <sequence type="described" ref="VSP_042575 VSP_042576 VSP_042577 VSP_042578"/>
    </isoform>
</comment>
<comment type="tissue specificity">
    <text evidence="7">Strongly expressed in testis and lung. Weakly expressed in heart, brain, spleen, kidney and tongue.</text>
</comment>
<comment type="developmental stage">
    <text evidence="8">In the postnatal testis, reaches a peak of expression at postnatal days 26-28 (at protein level) (PubMed:35700329). Expression is undetectable until postnatal day 21 corresponding to the 142 stage of round spermatids (PubMed:35700329).</text>
</comment>
<comment type="domain">
    <text evidence="5">The globin domain is circularly permuted. The globin domain, which normally consists of eight consecutive alpha-helices from A (N-terminal) to H (C-terminal), is circularly permutated and split into two parts. The part containing helices A and B is shifted C-terminally and is separated from the main globin sequence (helices C-H) by a potential calmodulin-binding IQ domain.</text>
</comment>
<comment type="disruption phenotype">
    <text evidence="8 9">Adgb knockout males display infertility, reduced testis weight, impaired maturation of elongating spermatids, abnormal sperm shape and ultrastructural defects in microtubule and mitochondrial organization (PubMed:35700329). Females display no fertility issues (PubMed:35700329). Epididymal sperm display multiple flagellar malformations including coiled, bifid or shortened flagella, and erratic acrosomal development (PubMed:35700329). The spermatids are not able to move to the lumen and enter the epididymis to undergo further maturation (PubMed:36995441). A high rate of apoptotic events might further aggravate the decrease of sperm (PubMed:36995441). Mislocalization of Sept10 in sperm (PubMed:35700329).</text>
</comment>
<comment type="similarity">
    <text evidence="12">In the central section; belongs to the globin family.</text>
</comment>
<comment type="similarity">
    <text evidence="12">In the N-terminal section; belongs to the peptidase C2 family.</text>
</comment>
<comment type="caution">
    <text evidence="8 12">May contribute directly or indirectly to the proteolytic cleavage of SEPT10 (PubMed:35700329). However, the calpain domain lacks the conserved active site suggesting it is probably catalytically inactive as a calcium-dependent cysteine-type endopeptidase.</text>
</comment>
<gene>
    <name evidence="11 13" type="primary">Adgb</name>
</gene>
<proteinExistence type="evidence at protein level"/>